<proteinExistence type="inferred from homology"/>
<gene>
    <name type="primary">fusA</name>
    <name type="synonym">fus</name>
    <name type="ordered locus">Ta0446</name>
</gene>
<name>EF2_THEAC</name>
<comment type="function">
    <text evidence="1">Catalyzes the GTP-dependent ribosomal translocation step during translation elongation. During this step, the ribosome changes from the pre-translocational (PRE) to the post-translocational (POST) state as the newly formed A-site-bound peptidyl-tRNA and P-site-bound deacylated tRNA move to the P and E sites, respectively. Catalyzes the coordinated movement of the two tRNA molecules, the mRNA and conformational changes in the ribosome (By similarity).</text>
</comment>
<comment type="subcellular location">
    <subcellularLocation>
        <location evidence="1">Cytoplasm</location>
    </subcellularLocation>
</comment>
<comment type="similarity">
    <text evidence="2">Belongs to the TRAFAC class translation factor GTPase superfamily. Classic translation factor GTPase family. EF-G/EF-2 subfamily.</text>
</comment>
<reference key="1">
    <citation type="journal article" date="1991" name="FEMS Microbiol. Lett.">
        <title>Cloning and sequencing of the fus-gene encoding elongation factor 2 in the archaebacterium Thermoplasma acidophilum.</title>
        <authorList>
            <person name="Pechmann H.J.L."/>
            <person name="Tesch A."/>
            <person name="Klink F."/>
        </authorList>
    </citation>
    <scope>NUCLEOTIDE SEQUENCE [GENOMIC DNA]</scope>
    <source>
        <strain>ATCC 25905 / DSM 1728 / JCM 9062 / NBRC 15155 / AMRC-C165</strain>
    </source>
</reference>
<reference key="2">
    <citation type="journal article" date="2000" name="Nature">
        <title>The genome sequence of the thermoacidophilic scavenger Thermoplasma acidophilum.</title>
        <authorList>
            <person name="Ruepp A."/>
            <person name="Graml W."/>
            <person name="Santos-Martinez M.-L."/>
            <person name="Koretke K.K."/>
            <person name="Volker C."/>
            <person name="Mewes H.-W."/>
            <person name="Frishman D."/>
            <person name="Stocker S."/>
            <person name="Lupas A.N."/>
            <person name="Baumeister W."/>
        </authorList>
    </citation>
    <scope>NUCLEOTIDE SEQUENCE [LARGE SCALE GENOMIC DNA]</scope>
    <source>
        <strain>ATCC 25905 / DSM 1728 / JCM 9062 / NBRC 15155 / AMRC-C165</strain>
    </source>
</reference>
<sequence>MGRKEDNIEKALKIVEHTELIRNIGIVAHIDHGKTTLSDNLIAGAGMMSEELAGKQLVLDYDEQEQARGITINAAVASMVHTFQGKEYLINLIDTPGHVDFGGDVTRAMRAVDGVIVVVDSVEGVMPQTETVIRQALREHVKPVLFINKIDRLINELRLNSDEMQKRFTKIITDVNRLISKYAPQQFTKEWQVSVQDGRVAFGSAYNNWAISIPAMAETKITFKDIVEYVKNGKQKELAQKNQLHKIILNMVIRHLPDPKTAQSYRIKQIWKGDLDSEIGKAMINCDYKGPVAMMVTKIIIDPHAGEIAIGRLFSGTVKKGTDLYISGAGKGKVQTLAMMVGPDRIPVDEITAGNIAAIVGLKGAIAGATVSSLENMVPFEPMIHYSEPVVTLAIEAKHTADLPRLIEVLRDISKADPSIQVDINQETGEHLISGMGELHLDVTLYRIKNDYKVEVETSDPIVVYRETVEKKGGPFEGKSPNKHNRFYFEVEPLKPEVIQAIEDGDIPQGSKFKDKKALVELLVSKGIDRDEAKGLVCVEGTNMMFDVTRGIQYLDETMELLIEAFVEVMNRGPLANEKVFGVKARLVDAKLHEDSIHRGPAQVIPAGRNSIYGAMCEAKRVLLEPVQRVFINVPQEEMGAAINEIQQRRGIIEDMKQEGDEISLTAKVPVAGMFGFASAIRGATGGKVLWSFENAGYQKVPPELQDSIVRSIRERKGLRQEPYDADYYASM</sequence>
<evidence type="ECO:0000250" key="1"/>
<evidence type="ECO:0000305" key="2"/>
<dbReference type="EMBL" id="X56840">
    <property type="protein sequence ID" value="CAA40171.1"/>
    <property type="molecule type" value="Genomic_DNA"/>
</dbReference>
<dbReference type="EMBL" id="AL445064">
    <property type="protein sequence ID" value="CAC11588.1"/>
    <property type="molecule type" value="Genomic_DNA"/>
</dbReference>
<dbReference type="PIR" id="S36089">
    <property type="entry name" value="S36089"/>
</dbReference>
<dbReference type="RefSeq" id="WP_010900873.1">
    <property type="nucleotide sequence ID" value="NC_002578.1"/>
</dbReference>
<dbReference type="SMR" id="P26752"/>
<dbReference type="FunCoup" id="P26752">
    <property type="interactions" value="184"/>
</dbReference>
<dbReference type="STRING" id="273075.gene:9571666"/>
<dbReference type="PaxDb" id="273075-Ta0446"/>
<dbReference type="EnsemblBacteria" id="CAC11588">
    <property type="protein sequence ID" value="CAC11588"/>
    <property type="gene ID" value="CAC11588"/>
</dbReference>
<dbReference type="KEGG" id="tac:Ta0446"/>
<dbReference type="eggNOG" id="arCOG01559">
    <property type="taxonomic scope" value="Archaea"/>
</dbReference>
<dbReference type="HOGENOM" id="CLU_002794_11_1_2"/>
<dbReference type="InParanoid" id="P26752"/>
<dbReference type="OrthoDB" id="6290at2157"/>
<dbReference type="Proteomes" id="UP000001024">
    <property type="component" value="Chromosome"/>
</dbReference>
<dbReference type="GO" id="GO:0005829">
    <property type="term" value="C:cytosol"/>
    <property type="evidence" value="ECO:0007669"/>
    <property type="project" value="TreeGrafter"/>
</dbReference>
<dbReference type="GO" id="GO:1990904">
    <property type="term" value="C:ribonucleoprotein complex"/>
    <property type="evidence" value="ECO:0007669"/>
    <property type="project" value="TreeGrafter"/>
</dbReference>
<dbReference type="GO" id="GO:0005525">
    <property type="term" value="F:GTP binding"/>
    <property type="evidence" value="ECO:0007669"/>
    <property type="project" value="UniProtKB-UniRule"/>
</dbReference>
<dbReference type="GO" id="GO:0003924">
    <property type="term" value="F:GTPase activity"/>
    <property type="evidence" value="ECO:0007669"/>
    <property type="project" value="InterPro"/>
</dbReference>
<dbReference type="GO" id="GO:0003746">
    <property type="term" value="F:translation elongation factor activity"/>
    <property type="evidence" value="ECO:0007669"/>
    <property type="project" value="UniProtKB-UniRule"/>
</dbReference>
<dbReference type="CDD" id="cd01681">
    <property type="entry name" value="aeEF2_snRNP_like_IV"/>
    <property type="match status" value="1"/>
</dbReference>
<dbReference type="CDD" id="cd01885">
    <property type="entry name" value="EF2"/>
    <property type="match status" value="1"/>
</dbReference>
<dbReference type="CDD" id="cd16268">
    <property type="entry name" value="EF2_II"/>
    <property type="match status" value="1"/>
</dbReference>
<dbReference type="CDD" id="cd16261">
    <property type="entry name" value="EF2_snRNP_III"/>
    <property type="match status" value="1"/>
</dbReference>
<dbReference type="CDD" id="cd01514">
    <property type="entry name" value="Elongation_Factor_C"/>
    <property type="match status" value="1"/>
</dbReference>
<dbReference type="FunFam" id="3.30.70.870:FF:000002">
    <property type="entry name" value="Translation elongation factor 2"/>
    <property type="match status" value="1"/>
</dbReference>
<dbReference type="Gene3D" id="3.30.230.10">
    <property type="match status" value="1"/>
</dbReference>
<dbReference type="Gene3D" id="3.30.70.240">
    <property type="match status" value="1"/>
</dbReference>
<dbReference type="Gene3D" id="3.30.70.870">
    <property type="entry name" value="Elongation Factor G (Translational Gtpase), domain 3"/>
    <property type="match status" value="1"/>
</dbReference>
<dbReference type="Gene3D" id="3.40.50.300">
    <property type="entry name" value="P-loop containing nucleotide triphosphate hydrolases"/>
    <property type="match status" value="1"/>
</dbReference>
<dbReference type="Gene3D" id="2.40.30.10">
    <property type="entry name" value="Translation factors"/>
    <property type="match status" value="1"/>
</dbReference>
<dbReference type="HAMAP" id="MF_00054_A">
    <property type="entry name" value="EF_G_EF_2_A"/>
    <property type="match status" value="1"/>
</dbReference>
<dbReference type="InterPro" id="IPR041095">
    <property type="entry name" value="EFG_II"/>
</dbReference>
<dbReference type="InterPro" id="IPR035647">
    <property type="entry name" value="EFG_III/V"/>
</dbReference>
<dbReference type="InterPro" id="IPR000640">
    <property type="entry name" value="EFG_V-like"/>
</dbReference>
<dbReference type="InterPro" id="IPR004161">
    <property type="entry name" value="EFTu-like_2"/>
</dbReference>
<dbReference type="InterPro" id="IPR031157">
    <property type="entry name" value="G_TR_CS"/>
</dbReference>
<dbReference type="InterPro" id="IPR027417">
    <property type="entry name" value="P-loop_NTPase"/>
</dbReference>
<dbReference type="InterPro" id="IPR020568">
    <property type="entry name" value="Ribosomal_Su5_D2-typ_SF"/>
</dbReference>
<dbReference type="InterPro" id="IPR014721">
    <property type="entry name" value="Ribsml_uS5_D2-typ_fold_subgr"/>
</dbReference>
<dbReference type="InterPro" id="IPR005225">
    <property type="entry name" value="Small_GTP-bd"/>
</dbReference>
<dbReference type="InterPro" id="IPR000795">
    <property type="entry name" value="T_Tr_GTP-bd_dom"/>
</dbReference>
<dbReference type="InterPro" id="IPR009000">
    <property type="entry name" value="Transl_B-barrel_sf"/>
</dbReference>
<dbReference type="InterPro" id="IPR004543">
    <property type="entry name" value="Transl_elong_EFG/EF2_arc"/>
</dbReference>
<dbReference type="InterPro" id="IPR005517">
    <property type="entry name" value="Transl_elong_EFG/EF2_IV"/>
</dbReference>
<dbReference type="NCBIfam" id="TIGR00490">
    <property type="entry name" value="aEF-2"/>
    <property type="match status" value="1"/>
</dbReference>
<dbReference type="NCBIfam" id="TIGR00231">
    <property type="entry name" value="small_GTP"/>
    <property type="match status" value="1"/>
</dbReference>
<dbReference type="PANTHER" id="PTHR42908:SF3">
    <property type="entry name" value="ELONGATION FACTOR-LIKE GTPASE 1"/>
    <property type="match status" value="1"/>
</dbReference>
<dbReference type="PANTHER" id="PTHR42908">
    <property type="entry name" value="TRANSLATION ELONGATION FACTOR-RELATED"/>
    <property type="match status" value="1"/>
</dbReference>
<dbReference type="Pfam" id="PF00679">
    <property type="entry name" value="EFG_C"/>
    <property type="match status" value="1"/>
</dbReference>
<dbReference type="Pfam" id="PF14492">
    <property type="entry name" value="EFG_III"/>
    <property type="match status" value="1"/>
</dbReference>
<dbReference type="Pfam" id="PF03764">
    <property type="entry name" value="EFG_IV"/>
    <property type="match status" value="1"/>
</dbReference>
<dbReference type="Pfam" id="PF00009">
    <property type="entry name" value="GTP_EFTU"/>
    <property type="match status" value="1"/>
</dbReference>
<dbReference type="Pfam" id="PF03144">
    <property type="entry name" value="GTP_EFTU_D2"/>
    <property type="match status" value="1"/>
</dbReference>
<dbReference type="PRINTS" id="PR00315">
    <property type="entry name" value="ELONGATNFCT"/>
</dbReference>
<dbReference type="SMART" id="SM00838">
    <property type="entry name" value="EFG_C"/>
    <property type="match status" value="1"/>
</dbReference>
<dbReference type="SMART" id="SM00889">
    <property type="entry name" value="EFG_IV"/>
    <property type="match status" value="1"/>
</dbReference>
<dbReference type="SUPFAM" id="SSF54980">
    <property type="entry name" value="EF-G C-terminal domain-like"/>
    <property type="match status" value="2"/>
</dbReference>
<dbReference type="SUPFAM" id="SSF52540">
    <property type="entry name" value="P-loop containing nucleoside triphosphate hydrolases"/>
    <property type="match status" value="1"/>
</dbReference>
<dbReference type="SUPFAM" id="SSF54211">
    <property type="entry name" value="Ribosomal protein S5 domain 2-like"/>
    <property type="match status" value="1"/>
</dbReference>
<dbReference type="SUPFAM" id="SSF50447">
    <property type="entry name" value="Translation proteins"/>
    <property type="match status" value="1"/>
</dbReference>
<dbReference type="PROSITE" id="PS00301">
    <property type="entry name" value="G_TR_1"/>
    <property type="match status" value="1"/>
</dbReference>
<dbReference type="PROSITE" id="PS51722">
    <property type="entry name" value="G_TR_2"/>
    <property type="match status" value="1"/>
</dbReference>
<accession>P26752</accession>
<keyword id="KW-0963">Cytoplasm</keyword>
<keyword id="KW-0251">Elongation factor</keyword>
<keyword id="KW-0342">GTP-binding</keyword>
<keyword id="KW-0547">Nucleotide-binding</keyword>
<keyword id="KW-0648">Protein biosynthesis</keyword>
<keyword id="KW-1185">Reference proteome</keyword>
<feature type="chain" id="PRO_0000091050" description="Elongation factor 2">
    <location>
        <begin position="1"/>
        <end position="732"/>
    </location>
</feature>
<feature type="domain" description="tr-type G">
    <location>
        <begin position="19"/>
        <end position="228"/>
    </location>
</feature>
<feature type="binding site" evidence="1">
    <location>
        <begin position="28"/>
        <end position="35"/>
    </location>
    <ligand>
        <name>GTP</name>
        <dbReference type="ChEBI" id="CHEBI:37565"/>
    </ligand>
</feature>
<feature type="binding site" evidence="1">
    <location>
        <begin position="94"/>
        <end position="98"/>
    </location>
    <ligand>
        <name>GTP</name>
        <dbReference type="ChEBI" id="CHEBI:37565"/>
    </ligand>
</feature>
<feature type="binding site" evidence="1">
    <location>
        <begin position="148"/>
        <end position="151"/>
    </location>
    <ligand>
        <name>GTP</name>
        <dbReference type="ChEBI" id="CHEBI:37565"/>
    </ligand>
</feature>
<feature type="modified residue" description="Diphthamide" evidence="1">
    <location>
        <position position="598"/>
    </location>
</feature>
<feature type="sequence conflict" description="In Ref. 1; CAA40171." evidence="2" ref="1">
    <original>A</original>
    <variation>D</variation>
    <location>
        <position position="730"/>
    </location>
</feature>
<protein>
    <recommendedName>
        <fullName>Elongation factor 2</fullName>
        <shortName>EF-2</shortName>
    </recommendedName>
</protein>
<organism>
    <name type="scientific">Thermoplasma acidophilum (strain ATCC 25905 / DSM 1728 / JCM 9062 / NBRC 15155 / AMRC-C165)</name>
    <dbReference type="NCBI Taxonomy" id="273075"/>
    <lineage>
        <taxon>Archaea</taxon>
        <taxon>Methanobacteriati</taxon>
        <taxon>Thermoplasmatota</taxon>
        <taxon>Thermoplasmata</taxon>
        <taxon>Thermoplasmatales</taxon>
        <taxon>Thermoplasmataceae</taxon>
        <taxon>Thermoplasma</taxon>
    </lineage>
</organism>